<proteinExistence type="inferred from homology"/>
<keyword id="KW-0488">Methylation</keyword>
<keyword id="KW-1185">Reference proteome</keyword>
<keyword id="KW-0687">Ribonucleoprotein</keyword>
<keyword id="KW-0689">Ribosomal protein</keyword>
<keyword id="KW-0694">RNA-binding</keyword>
<keyword id="KW-0699">rRNA-binding</keyword>
<keyword id="KW-0820">tRNA-binding</keyword>
<organism>
    <name type="scientific">Phenylobacterium zucineum (strain HLK1)</name>
    <dbReference type="NCBI Taxonomy" id="450851"/>
    <lineage>
        <taxon>Bacteria</taxon>
        <taxon>Pseudomonadati</taxon>
        <taxon>Pseudomonadota</taxon>
        <taxon>Alphaproteobacteria</taxon>
        <taxon>Caulobacterales</taxon>
        <taxon>Caulobacteraceae</taxon>
        <taxon>Phenylobacterium</taxon>
    </lineage>
</organism>
<comment type="function">
    <text evidence="2">With S4 and S5 plays an important role in translational accuracy.</text>
</comment>
<comment type="function">
    <text evidence="2">Interacts with and stabilizes bases of the 16S rRNA that are involved in tRNA selection in the A site and with the mRNA backbone. Located at the interface of the 30S and 50S subunits, it traverses the body of the 30S subunit contacting proteins on the other side and probably holding the rRNA structure together. The combined cluster of proteins S8, S12 and S17 appears to hold together the shoulder and platform of the 30S subunit.</text>
</comment>
<comment type="subunit">
    <text evidence="2">Part of the 30S ribosomal subunit. Contacts proteins S8 and S17. May interact with IF1 in the 30S initiation complex.</text>
</comment>
<comment type="similarity">
    <text evidence="2">Belongs to the universal ribosomal protein uS12 family.</text>
</comment>
<protein>
    <recommendedName>
        <fullName evidence="2">Small ribosomal subunit protein uS12</fullName>
    </recommendedName>
    <alternativeName>
        <fullName evidence="3">30S ribosomal protein S12</fullName>
    </alternativeName>
</protein>
<dbReference type="EMBL" id="CP000747">
    <property type="protein sequence ID" value="ACG77638.1"/>
    <property type="molecule type" value="Genomic_DNA"/>
</dbReference>
<dbReference type="RefSeq" id="WP_012521783.1">
    <property type="nucleotide sequence ID" value="NC_011144.1"/>
</dbReference>
<dbReference type="SMR" id="B4R8L1"/>
<dbReference type="STRING" id="450851.PHZ_c1224"/>
<dbReference type="KEGG" id="pzu:PHZ_c1224"/>
<dbReference type="eggNOG" id="COG0048">
    <property type="taxonomic scope" value="Bacteria"/>
</dbReference>
<dbReference type="HOGENOM" id="CLU_104295_1_2_5"/>
<dbReference type="OrthoDB" id="9802366at2"/>
<dbReference type="Proteomes" id="UP000001868">
    <property type="component" value="Chromosome"/>
</dbReference>
<dbReference type="GO" id="GO:0015935">
    <property type="term" value="C:small ribosomal subunit"/>
    <property type="evidence" value="ECO:0007669"/>
    <property type="project" value="InterPro"/>
</dbReference>
<dbReference type="GO" id="GO:0019843">
    <property type="term" value="F:rRNA binding"/>
    <property type="evidence" value="ECO:0007669"/>
    <property type="project" value="UniProtKB-UniRule"/>
</dbReference>
<dbReference type="GO" id="GO:0003735">
    <property type="term" value="F:structural constituent of ribosome"/>
    <property type="evidence" value="ECO:0007669"/>
    <property type="project" value="InterPro"/>
</dbReference>
<dbReference type="GO" id="GO:0000049">
    <property type="term" value="F:tRNA binding"/>
    <property type="evidence" value="ECO:0007669"/>
    <property type="project" value="UniProtKB-UniRule"/>
</dbReference>
<dbReference type="GO" id="GO:0006412">
    <property type="term" value="P:translation"/>
    <property type="evidence" value="ECO:0007669"/>
    <property type="project" value="UniProtKB-UniRule"/>
</dbReference>
<dbReference type="CDD" id="cd03368">
    <property type="entry name" value="Ribosomal_S12"/>
    <property type="match status" value="1"/>
</dbReference>
<dbReference type="FunFam" id="2.40.50.140:FF:000001">
    <property type="entry name" value="30S ribosomal protein S12"/>
    <property type="match status" value="1"/>
</dbReference>
<dbReference type="Gene3D" id="2.40.50.140">
    <property type="entry name" value="Nucleic acid-binding proteins"/>
    <property type="match status" value="1"/>
</dbReference>
<dbReference type="HAMAP" id="MF_00403_B">
    <property type="entry name" value="Ribosomal_uS12_B"/>
    <property type="match status" value="1"/>
</dbReference>
<dbReference type="InterPro" id="IPR012340">
    <property type="entry name" value="NA-bd_OB-fold"/>
</dbReference>
<dbReference type="InterPro" id="IPR006032">
    <property type="entry name" value="Ribosomal_uS12"/>
</dbReference>
<dbReference type="InterPro" id="IPR005679">
    <property type="entry name" value="Ribosomal_uS12_bac"/>
</dbReference>
<dbReference type="NCBIfam" id="TIGR00981">
    <property type="entry name" value="rpsL_bact"/>
    <property type="match status" value="1"/>
</dbReference>
<dbReference type="PANTHER" id="PTHR11652">
    <property type="entry name" value="30S RIBOSOMAL PROTEIN S12 FAMILY MEMBER"/>
    <property type="match status" value="1"/>
</dbReference>
<dbReference type="Pfam" id="PF00164">
    <property type="entry name" value="Ribosom_S12_S23"/>
    <property type="match status" value="1"/>
</dbReference>
<dbReference type="PIRSF" id="PIRSF002133">
    <property type="entry name" value="Ribosomal_S12/S23"/>
    <property type="match status" value="1"/>
</dbReference>
<dbReference type="PRINTS" id="PR01034">
    <property type="entry name" value="RIBOSOMALS12"/>
</dbReference>
<dbReference type="SUPFAM" id="SSF50249">
    <property type="entry name" value="Nucleic acid-binding proteins"/>
    <property type="match status" value="1"/>
</dbReference>
<dbReference type="PROSITE" id="PS00055">
    <property type="entry name" value="RIBOSOMAL_S12"/>
    <property type="match status" value="1"/>
</dbReference>
<gene>
    <name evidence="2" type="primary">rpsL</name>
    <name type="ordered locus">PHZ_c1224</name>
</gene>
<feature type="chain" id="PRO_1000194204" description="Small ribosomal subunit protein uS12">
    <location>
        <begin position="1"/>
        <end position="123"/>
    </location>
</feature>
<feature type="modified residue" description="3-methylthioaspartic acid" evidence="1">
    <location>
        <position position="89"/>
    </location>
</feature>
<accession>B4R8L1</accession>
<reference key="1">
    <citation type="journal article" date="2008" name="BMC Genomics">
        <title>Complete genome of Phenylobacterium zucineum - a novel facultative intracellular bacterium isolated from human erythroleukemia cell line K562.</title>
        <authorList>
            <person name="Luo Y."/>
            <person name="Xu X."/>
            <person name="Ding Z."/>
            <person name="Liu Z."/>
            <person name="Zhang B."/>
            <person name="Yan Z."/>
            <person name="Sun J."/>
            <person name="Hu S."/>
            <person name="Hu X."/>
        </authorList>
    </citation>
    <scope>NUCLEOTIDE SEQUENCE [LARGE SCALE GENOMIC DNA]</scope>
    <source>
        <strain>HLK1</strain>
    </source>
</reference>
<sequence>MPTVNQLIRKPRQTKPARNKVPALKGCPQRRGVCTRVYTTTPKKPNSALRKVAKVRLTTGIEAVCYIPGEGHNLQEHSVVLIRGGRVKDLPGVRYHILRGVLDTQGVKDRKQRRSLYGAKRPK</sequence>
<evidence type="ECO:0000250" key="1"/>
<evidence type="ECO:0000255" key="2">
    <source>
        <dbReference type="HAMAP-Rule" id="MF_00403"/>
    </source>
</evidence>
<evidence type="ECO:0000305" key="3"/>
<name>RS12_PHEZH</name>